<proteinExistence type="inferred from homology"/>
<comment type="similarity">
    <text evidence="2">Belongs to the DinI family.</text>
</comment>
<comment type="sequence caution" evidence="2">
    <conflict type="erroneous initiation">
        <sequence resource="EMBL-CDS" id="AAA23401"/>
    </conflict>
    <text>Extended N-terminus.</text>
</comment>
<feature type="chain" id="PRO_0000201649" description="DinI-like protein in retron Ec67">
    <location>
        <begin position="1"/>
        <end position="77"/>
    </location>
</feature>
<sequence length="77" mass="9160">MRIEIMIDKEQKISQSTLDALESELYRNLRPLYPKTVIRIRKGSSNGVELTGLQLDEERKQVMKIMQKVWEDDSWLH</sequence>
<accession>P21320</accession>
<protein>
    <recommendedName>
        <fullName>DinI-like protein in retron Ec67</fullName>
    </recommendedName>
    <alternativeName>
        <fullName evidence="1">Protein ORFf in retron Ec67</fullName>
    </alternativeName>
</protein>
<evidence type="ECO:0000303" key="1">
    <source>
    </source>
</evidence>
<evidence type="ECO:0000305" key="2"/>
<name>DINIR_ECOLX</name>
<reference key="1">
    <citation type="journal article" date="1990" name="Proc. Natl. Acad. Sci. U.S.A.">
        <title>Retron for the 67-base multicopy single-stranded DNA from Escherichia coli: a potential transposable element encoding both reverse transcriptase and Dam methylase functions.</title>
        <authorList>
            <person name="Hsu M.-Y."/>
            <person name="Inouye M."/>
            <person name="Inouye S."/>
        </authorList>
    </citation>
    <scope>NUCLEOTIDE SEQUENCE [GENOMIC DNA]</scope>
    <source>
        <strain>O1:NM / CL-1</strain>
    </source>
</reference>
<dbReference type="EMBL" id="M55249">
    <property type="protein sequence ID" value="AAA23401.1"/>
    <property type="status" value="ALT_INIT"/>
    <property type="molecule type" value="Genomic_DNA"/>
</dbReference>
<dbReference type="PIR" id="JQ0861">
    <property type="entry name" value="JQ0861"/>
</dbReference>
<dbReference type="RefSeq" id="WP_001217575.1">
    <property type="nucleotide sequence ID" value="NZ_WXYX01000001.1"/>
</dbReference>
<dbReference type="SMR" id="P21320"/>
<dbReference type="eggNOG" id="ENOG5032S0J">
    <property type="taxonomic scope" value="Bacteria"/>
</dbReference>
<dbReference type="GO" id="GO:0006281">
    <property type="term" value="P:DNA repair"/>
    <property type="evidence" value="ECO:0007669"/>
    <property type="project" value="UniProtKB-KW"/>
</dbReference>
<dbReference type="GO" id="GO:0009432">
    <property type="term" value="P:SOS response"/>
    <property type="evidence" value="ECO:0007669"/>
    <property type="project" value="TreeGrafter"/>
</dbReference>
<dbReference type="FunFam" id="3.30.910.10:FF:000002">
    <property type="entry name" value="DinI-like family protein"/>
    <property type="match status" value="1"/>
</dbReference>
<dbReference type="Gene3D" id="3.30.910.10">
    <property type="entry name" value="DinI-like"/>
    <property type="match status" value="1"/>
</dbReference>
<dbReference type="InterPro" id="IPR036687">
    <property type="entry name" value="DinI-like_sf"/>
</dbReference>
<dbReference type="InterPro" id="IPR010391">
    <property type="entry name" value="DNA_damage-inducible_DinI-like"/>
</dbReference>
<dbReference type="PANTHER" id="PTHR36572:SF2">
    <property type="entry name" value="DNA DAMAGE-INDUCIBLE PROTEIN I"/>
    <property type="match status" value="1"/>
</dbReference>
<dbReference type="PANTHER" id="PTHR36572">
    <property type="entry name" value="DNA DAMAGE-INDUCIBLE PROTEIN I-RELATED"/>
    <property type="match status" value="1"/>
</dbReference>
<dbReference type="Pfam" id="PF06183">
    <property type="entry name" value="DinI"/>
    <property type="match status" value="1"/>
</dbReference>
<dbReference type="SUPFAM" id="SSF54857">
    <property type="entry name" value="DNA damage-inducible protein DinI"/>
    <property type="match status" value="1"/>
</dbReference>
<organism>
    <name type="scientific">Escherichia coli</name>
    <dbReference type="NCBI Taxonomy" id="562"/>
    <lineage>
        <taxon>Bacteria</taxon>
        <taxon>Pseudomonadati</taxon>
        <taxon>Pseudomonadota</taxon>
        <taxon>Gammaproteobacteria</taxon>
        <taxon>Enterobacterales</taxon>
        <taxon>Enterobacteriaceae</taxon>
        <taxon>Escherichia</taxon>
    </lineage>
</organism>
<keyword id="KW-0227">DNA damage</keyword>
<keyword id="KW-0234">DNA repair</keyword>
<keyword id="KW-0814">Transposable element</keyword>